<proteinExistence type="evidence at transcript level"/>
<evidence type="ECO:0000250" key="1"/>
<evidence type="ECO:0000303" key="2">
    <source>
    </source>
</evidence>
<evidence type="ECO:0000305" key="3"/>
<feature type="chain" id="PRO_0000423382" description="Mitotic checkpoint protein BUB3.3">
    <location>
        <begin position="1"/>
        <end position="314"/>
    </location>
</feature>
<feature type="repeat" description="WD 1">
    <location>
        <begin position="11"/>
        <end position="50"/>
    </location>
</feature>
<feature type="repeat" description="WD 2">
    <location>
        <begin position="52"/>
        <end position="90"/>
    </location>
</feature>
<feature type="repeat" description="WD 3">
    <location>
        <begin position="92"/>
        <end position="131"/>
    </location>
</feature>
<feature type="repeat" description="WD 4">
    <location>
        <begin position="134"/>
        <end position="173"/>
    </location>
</feature>
<feature type="repeat" description="WD 5">
    <location>
        <begin position="176"/>
        <end position="215"/>
    </location>
</feature>
<feature type="repeat" description="WD 6">
    <location>
        <begin position="229"/>
        <end position="269"/>
    </location>
</feature>
<feature type="repeat" description="WD 7">
    <location>
        <begin position="272"/>
        <end position="311"/>
    </location>
</feature>
<feature type="splice variant" id="VSP_047766" description="In isoform 2." evidence="2">
    <original>CGSGTFVTGDNEGYVISWNAKSRRRLNELPRYSNSIASLAFDHTGELLAIASSHTYQDAKEKEEAPQVFIHR</original>
    <variation>WYMSLIHHLMVHMIDHQTNSFLVATVGQGL</variation>
    <location>
        <begin position="242"/>
        <end position="313"/>
    </location>
</feature>
<feature type="sequence conflict" description="In Ref. 4; AAM65609." evidence="3" ref="4">
    <original>D</original>
    <variation>N</variation>
    <location>
        <position position="41"/>
    </location>
</feature>
<feature type="sequence conflict" description="In Ref. 4; AAM65609." evidence="3" ref="4">
    <original>FT</original>
    <variation>YA</variation>
    <location>
        <begin position="69"/>
        <end position="70"/>
    </location>
</feature>
<feature type="sequence conflict" description="In Ref. 4; AAM65609." evidence="3" ref="4">
    <original>V</original>
    <variation>F</variation>
    <location>
        <position position="87"/>
    </location>
</feature>
<feature type="sequence conflict" description="In Ref. 4; AAM65609." evidence="3" ref="4">
    <original>S</original>
    <variation>A</variation>
    <location>
        <position position="97"/>
    </location>
</feature>
<feature type="sequence conflict" description="In Ref. 4; AAM65609." evidence="3" ref="4">
    <original>D</original>
    <variation>N</variation>
    <location>
        <position position="154"/>
    </location>
</feature>
<reference key="1">
    <citation type="journal article" date="2000" name="Nature">
        <title>Sequence and analysis of chromosome 1 of the plant Arabidopsis thaliana.</title>
        <authorList>
            <person name="Theologis A."/>
            <person name="Ecker J.R."/>
            <person name="Palm C.J."/>
            <person name="Federspiel N.A."/>
            <person name="Kaul S."/>
            <person name="White O."/>
            <person name="Alonso J."/>
            <person name="Altafi H."/>
            <person name="Araujo R."/>
            <person name="Bowman C.L."/>
            <person name="Brooks S.Y."/>
            <person name="Buehler E."/>
            <person name="Chan A."/>
            <person name="Chao Q."/>
            <person name="Chen H."/>
            <person name="Cheuk R.F."/>
            <person name="Chin C.W."/>
            <person name="Chung M.K."/>
            <person name="Conn L."/>
            <person name="Conway A.B."/>
            <person name="Conway A.R."/>
            <person name="Creasy T.H."/>
            <person name="Dewar K."/>
            <person name="Dunn P."/>
            <person name="Etgu P."/>
            <person name="Feldblyum T.V."/>
            <person name="Feng J.-D."/>
            <person name="Fong B."/>
            <person name="Fujii C.Y."/>
            <person name="Gill J.E."/>
            <person name="Goldsmith A.D."/>
            <person name="Haas B."/>
            <person name="Hansen N.F."/>
            <person name="Hughes B."/>
            <person name="Huizar L."/>
            <person name="Hunter J.L."/>
            <person name="Jenkins J."/>
            <person name="Johnson-Hopson C."/>
            <person name="Khan S."/>
            <person name="Khaykin E."/>
            <person name="Kim C.J."/>
            <person name="Koo H.L."/>
            <person name="Kremenetskaia I."/>
            <person name="Kurtz D.B."/>
            <person name="Kwan A."/>
            <person name="Lam B."/>
            <person name="Langin-Hooper S."/>
            <person name="Lee A."/>
            <person name="Lee J.M."/>
            <person name="Lenz C.A."/>
            <person name="Li J.H."/>
            <person name="Li Y.-P."/>
            <person name="Lin X."/>
            <person name="Liu S.X."/>
            <person name="Liu Z.A."/>
            <person name="Luros J.S."/>
            <person name="Maiti R."/>
            <person name="Marziali A."/>
            <person name="Militscher J."/>
            <person name="Miranda M."/>
            <person name="Nguyen M."/>
            <person name="Nierman W.C."/>
            <person name="Osborne B.I."/>
            <person name="Pai G."/>
            <person name="Peterson J."/>
            <person name="Pham P.K."/>
            <person name="Rizzo M."/>
            <person name="Rooney T."/>
            <person name="Rowley D."/>
            <person name="Sakano H."/>
            <person name="Salzberg S.L."/>
            <person name="Schwartz J.R."/>
            <person name="Shinn P."/>
            <person name="Southwick A.M."/>
            <person name="Sun H."/>
            <person name="Tallon L.J."/>
            <person name="Tambunga G."/>
            <person name="Toriumi M.J."/>
            <person name="Town C.D."/>
            <person name="Utterback T."/>
            <person name="Van Aken S."/>
            <person name="Vaysberg M."/>
            <person name="Vysotskaia V.S."/>
            <person name="Walker M."/>
            <person name="Wu D."/>
            <person name="Yu G."/>
            <person name="Fraser C.M."/>
            <person name="Venter J.C."/>
            <person name="Davis R.W."/>
        </authorList>
    </citation>
    <scope>NUCLEOTIDE SEQUENCE [LARGE SCALE GENOMIC DNA]</scope>
    <source>
        <strain>cv. Columbia</strain>
    </source>
</reference>
<reference key="2">
    <citation type="journal article" date="2017" name="Plant J.">
        <title>Araport11: a complete reannotation of the Arabidopsis thaliana reference genome.</title>
        <authorList>
            <person name="Cheng C.Y."/>
            <person name="Krishnakumar V."/>
            <person name="Chan A.P."/>
            <person name="Thibaud-Nissen F."/>
            <person name="Schobel S."/>
            <person name="Town C.D."/>
        </authorList>
    </citation>
    <scope>GENOME REANNOTATION</scope>
    <source>
        <strain>cv. Columbia</strain>
    </source>
</reference>
<reference key="3">
    <citation type="journal article" date="2004" name="Genome Res.">
        <title>Whole genome sequence comparisons and 'full-length' cDNA sequences: a combined approach to evaluate and improve Arabidopsis genome annotation.</title>
        <authorList>
            <person name="Castelli V."/>
            <person name="Aury J.-M."/>
            <person name="Jaillon O."/>
            <person name="Wincker P."/>
            <person name="Clepet C."/>
            <person name="Menard M."/>
            <person name="Cruaud C."/>
            <person name="Quetier F."/>
            <person name="Scarpelli C."/>
            <person name="Schaechter V."/>
            <person name="Temple G."/>
            <person name="Caboche M."/>
            <person name="Weissenbach J."/>
            <person name="Salanoubat M."/>
        </authorList>
    </citation>
    <scope>NUCLEOTIDE SEQUENCE [LARGE SCALE MRNA] (ISOFORM 2)</scope>
    <source>
        <strain>cv. Columbia</strain>
    </source>
</reference>
<reference key="4">
    <citation type="submission" date="2002-03" db="EMBL/GenBank/DDBJ databases">
        <title>Full-length cDNA from Arabidopsis thaliana.</title>
        <authorList>
            <person name="Brover V.V."/>
            <person name="Troukhan M.E."/>
            <person name="Alexandrov N.A."/>
            <person name="Lu Y.-P."/>
            <person name="Flavell R.B."/>
            <person name="Feldmann K.A."/>
        </authorList>
    </citation>
    <scope>NUCLEOTIDE SEQUENCE [LARGE SCALE MRNA] (ISOFORM 1)</scope>
</reference>
<sequence length="314" mass="34763">MSGDRLEFENPIEDAVSRLRFSPQSNNLLVASWDSYLRLYDVESSSLSLELNSQAALLDCCFENESTSFTSGSDGFIRRYDLNAGTVDTIGRHDDISTSIVYSYEKGEVISTGFDEKIKFWDTRQRESLVFSTDAGGAVGCVTVSGNNLVVCVDASMHIYDLRNLDEAFQSYASQVEVPIRCITSVPYSRGYAVGSVDGRVAVDFPNTSCSSEIKYSFRCHPKSRNGRLDGVCINAIEFSPCGSGTFVTGDNEGYVISWNAKSRRRLNELPRYSNSIASLAFDHTGELLAIASSHTYQDAKEKEEAPQVFIHRL</sequence>
<comment type="function">
    <text evidence="1">Has a dual function in spindle-assembly checkpoint signaling and in promoting the establishment of correct kinetochore-microtubule (K-MT) attachments. Promotes the formation of stable end-on bipolar attachments. Necessary for kinetochore localization of BUB1. The BUB1/BUB3 complex plays a role in the inhibition of anaphase-promoting complex or cyclosome (APC/C) when spindle-assembly checkpoint is activated and inhibits the ubiquitin ligase activity of APC/C by phosphorylating its activator CDC20 (By similarity).</text>
</comment>
<comment type="subunit">
    <text evidence="1">Part of the mitotic checkpoint complex (MCC).</text>
</comment>
<comment type="subcellular location">
    <subcellularLocation>
        <location evidence="1">Nucleus</location>
    </subcellularLocation>
    <subcellularLocation>
        <location evidence="1">Chromosome</location>
        <location evidence="1">Centromere</location>
        <location evidence="1">Kinetochore</location>
    </subcellularLocation>
    <subcellularLocation>
        <location evidence="1">Cytoplasm</location>
        <location evidence="1">Cytoskeleton</location>
        <location evidence="1">Phragmoplast</location>
    </subcellularLocation>
    <subcellularLocation>
        <location evidence="1">Cytoplasm</location>
        <location evidence="1">Cytoskeleton</location>
        <location evidence="1">Spindle</location>
    </subcellularLocation>
    <text evidence="1">Accumulates onto both kinetochores and the spindle microtubules in cell arrested in metaphase. Starts to localize at kinetochores in prometaphase I (Pro-MI) stage and maintains the localization until the metaphase I-anaphase I (MI-AI) transition. Associates with unattached kinetochores upon spindle assembly checkpoint (SAC) activation. Present in the phragmoplast midline during the final step of cell division (By similarity).</text>
</comment>
<comment type="alternative products">
    <event type="alternative splicing"/>
    <isoform>
        <id>F4I241-1</id>
        <name>1</name>
        <sequence type="displayed"/>
    </isoform>
    <isoform>
        <id>F4I241-2</id>
        <name>2</name>
        <sequence type="described" ref="VSP_047766"/>
    </isoform>
</comment>
<comment type="similarity">
    <text evidence="3">Belongs to the WD repeat BUB3 family.</text>
</comment>
<comment type="sequence caution" evidence="3">
    <conflict type="erroneous gene model prediction">
        <sequence resource="EMBL-CDS" id="AAG52491"/>
    </conflict>
</comment>
<comment type="sequence caution" evidence="3">
    <conflict type="erroneous gene model prediction">
        <sequence resource="EMBL-CDS" id="AAG60107"/>
    </conflict>
</comment>
<comment type="sequence caution" evidence="3">
    <conflict type="frameshift">
        <sequence resource="EMBL" id="BX814360"/>
    </conflict>
</comment>
<dbReference type="EMBL" id="AC018364">
    <property type="protein sequence ID" value="AAG52491.1"/>
    <property type="status" value="ALT_SEQ"/>
    <property type="molecule type" value="Genomic_DNA"/>
</dbReference>
<dbReference type="EMBL" id="AC073178">
    <property type="protein sequence ID" value="AAG60107.1"/>
    <property type="status" value="ALT_SEQ"/>
    <property type="molecule type" value="Genomic_DNA"/>
</dbReference>
<dbReference type="EMBL" id="CP002684">
    <property type="protein sequence ID" value="AEE34919.1"/>
    <property type="molecule type" value="Genomic_DNA"/>
</dbReference>
<dbReference type="EMBL" id="CP002684">
    <property type="protein sequence ID" value="AEE34920.1"/>
    <property type="molecule type" value="Genomic_DNA"/>
</dbReference>
<dbReference type="EMBL" id="BX814360">
    <property type="status" value="NOT_ANNOTATED_CDS"/>
    <property type="molecule type" value="mRNA"/>
</dbReference>
<dbReference type="EMBL" id="AY088063">
    <property type="protein sequence ID" value="AAM65609.1"/>
    <property type="molecule type" value="mRNA"/>
</dbReference>
<dbReference type="RefSeq" id="NP_564965.1">
    <molecule id="F4I241-1"/>
    <property type="nucleotide sequence ID" value="NM_105607.3"/>
</dbReference>
<dbReference type="RefSeq" id="NP_974113.1">
    <molecule id="F4I241-2"/>
    <property type="nucleotide sequence ID" value="NM_202384.2"/>
</dbReference>
<dbReference type="SMR" id="F4I241"/>
<dbReference type="BioGRID" id="28493">
    <property type="interactions" value="15"/>
</dbReference>
<dbReference type="FunCoup" id="F4I241">
    <property type="interactions" value="70"/>
</dbReference>
<dbReference type="IntAct" id="F4I241">
    <property type="interactions" value="18"/>
</dbReference>
<dbReference type="STRING" id="3702.F4I241"/>
<dbReference type="PaxDb" id="3702-AT1G69400.1"/>
<dbReference type="ProteomicsDB" id="240483">
    <molecule id="F4I241-1"/>
</dbReference>
<dbReference type="EnsemblPlants" id="AT1G69400.1">
    <molecule id="F4I241-1"/>
    <property type="protein sequence ID" value="AT1G69400.1"/>
    <property type="gene ID" value="AT1G69400"/>
</dbReference>
<dbReference type="EnsemblPlants" id="AT1G69400.2">
    <molecule id="F4I241-2"/>
    <property type="protein sequence ID" value="AT1G69400.2"/>
    <property type="gene ID" value="AT1G69400"/>
</dbReference>
<dbReference type="GeneID" id="843272"/>
<dbReference type="Gramene" id="AT1G69400.1">
    <molecule id="F4I241-1"/>
    <property type="protein sequence ID" value="AT1G69400.1"/>
    <property type="gene ID" value="AT1G69400"/>
</dbReference>
<dbReference type="Gramene" id="AT1G69400.2">
    <molecule id="F4I241-2"/>
    <property type="protein sequence ID" value="AT1G69400.2"/>
    <property type="gene ID" value="AT1G69400"/>
</dbReference>
<dbReference type="KEGG" id="ath:AT1G69400"/>
<dbReference type="Araport" id="AT1G69400"/>
<dbReference type="TAIR" id="AT1G69400"/>
<dbReference type="eggNOG" id="KOG1036">
    <property type="taxonomic scope" value="Eukaryota"/>
</dbReference>
<dbReference type="HOGENOM" id="CLU_038526_3_0_1"/>
<dbReference type="InParanoid" id="F4I241"/>
<dbReference type="OMA" id="EVPIRCV"/>
<dbReference type="OrthoDB" id="10262475at2759"/>
<dbReference type="PRO" id="PR:F4I241"/>
<dbReference type="Proteomes" id="UP000006548">
    <property type="component" value="Chromosome 1"/>
</dbReference>
<dbReference type="ExpressionAtlas" id="F4I241">
    <property type="expression patterns" value="baseline and differential"/>
</dbReference>
<dbReference type="GO" id="GO:0080008">
    <property type="term" value="C:Cul4-RING E3 ubiquitin ligase complex"/>
    <property type="evidence" value="ECO:0000250"/>
    <property type="project" value="TAIR"/>
</dbReference>
<dbReference type="GO" id="GO:0000776">
    <property type="term" value="C:kinetochore"/>
    <property type="evidence" value="ECO:0007669"/>
    <property type="project" value="UniProtKB-KW"/>
</dbReference>
<dbReference type="GO" id="GO:0005634">
    <property type="term" value="C:nucleus"/>
    <property type="evidence" value="ECO:0007669"/>
    <property type="project" value="UniProtKB-SubCell"/>
</dbReference>
<dbReference type="GO" id="GO:0009524">
    <property type="term" value="C:phragmoplast"/>
    <property type="evidence" value="ECO:0007669"/>
    <property type="project" value="UniProtKB-SubCell"/>
</dbReference>
<dbReference type="GO" id="GO:0005819">
    <property type="term" value="C:spindle"/>
    <property type="evidence" value="ECO:0007669"/>
    <property type="project" value="UniProtKB-SubCell"/>
</dbReference>
<dbReference type="GO" id="GO:0051301">
    <property type="term" value="P:cell division"/>
    <property type="evidence" value="ECO:0007669"/>
    <property type="project" value="UniProtKB-KW"/>
</dbReference>
<dbReference type="GO" id="GO:0007059">
    <property type="term" value="P:chromosome segregation"/>
    <property type="evidence" value="ECO:0007669"/>
    <property type="project" value="UniProtKB-KW"/>
</dbReference>
<dbReference type="GO" id="GO:0051321">
    <property type="term" value="P:meiotic cell cycle"/>
    <property type="evidence" value="ECO:0007669"/>
    <property type="project" value="UniProtKB-KW"/>
</dbReference>
<dbReference type="FunFam" id="2.130.10.10:FF:001244">
    <property type="entry name" value="Mitotic checkpoint protein BUB3.3"/>
    <property type="match status" value="1"/>
</dbReference>
<dbReference type="Gene3D" id="2.130.10.10">
    <property type="entry name" value="YVTN repeat-like/Quinoprotein amine dehydrogenase"/>
    <property type="match status" value="1"/>
</dbReference>
<dbReference type="InterPro" id="IPR015943">
    <property type="entry name" value="WD40/YVTN_repeat-like_dom_sf"/>
</dbReference>
<dbReference type="InterPro" id="IPR019775">
    <property type="entry name" value="WD40_repeat_CS"/>
</dbReference>
<dbReference type="InterPro" id="IPR036322">
    <property type="entry name" value="WD40_repeat_dom_sf"/>
</dbReference>
<dbReference type="InterPro" id="IPR001680">
    <property type="entry name" value="WD40_rpt"/>
</dbReference>
<dbReference type="PANTHER" id="PTHR10971">
    <property type="entry name" value="MRNA EXPORT FACTOR AND BUB3"/>
    <property type="match status" value="1"/>
</dbReference>
<dbReference type="Pfam" id="PF00400">
    <property type="entry name" value="WD40"/>
    <property type="match status" value="1"/>
</dbReference>
<dbReference type="SMART" id="SM00320">
    <property type="entry name" value="WD40"/>
    <property type="match status" value="6"/>
</dbReference>
<dbReference type="SUPFAM" id="SSF50978">
    <property type="entry name" value="WD40 repeat-like"/>
    <property type="match status" value="1"/>
</dbReference>
<dbReference type="PROSITE" id="PS00678">
    <property type="entry name" value="WD_REPEATS_1"/>
    <property type="match status" value="1"/>
</dbReference>
<dbReference type="PROSITE" id="PS50082">
    <property type="entry name" value="WD_REPEATS_2"/>
    <property type="match status" value="2"/>
</dbReference>
<dbReference type="PROSITE" id="PS50294">
    <property type="entry name" value="WD_REPEATS_REGION"/>
    <property type="match status" value="1"/>
</dbReference>
<name>BUB33_ARATH</name>
<protein>
    <recommendedName>
        <fullName>Mitotic checkpoint protein BUB3.3</fullName>
    </recommendedName>
    <alternativeName>
        <fullName>Protein BUDDING UNINHIBITED BY BENZYMIDAZOL 3.3</fullName>
    </alternativeName>
</protein>
<gene>
    <name type="primary">BUB3.3</name>
    <name type="ordered locus">At1g69400</name>
    <name type="ORF">F10D13.23</name>
    <name type="ORF">F23O10.3</name>
</gene>
<accession>F4I241</accession>
<accession>F4I242</accession>
<accession>Q8LA29</accession>
<accession>Q9C795</accession>
<accession>Q9C986</accession>
<keyword id="KW-0025">Alternative splicing</keyword>
<keyword id="KW-0131">Cell cycle</keyword>
<keyword id="KW-0132">Cell division</keyword>
<keyword id="KW-0137">Centromere</keyword>
<keyword id="KW-0158">Chromosome</keyword>
<keyword id="KW-0159">Chromosome partition</keyword>
<keyword id="KW-0963">Cytoplasm</keyword>
<keyword id="KW-0206">Cytoskeleton</keyword>
<keyword id="KW-0995">Kinetochore</keyword>
<keyword id="KW-0469">Meiosis</keyword>
<keyword id="KW-0498">Mitosis</keyword>
<keyword id="KW-0539">Nucleus</keyword>
<keyword id="KW-1185">Reference proteome</keyword>
<keyword id="KW-0677">Repeat</keyword>
<keyword id="KW-0853">WD repeat</keyword>
<organism>
    <name type="scientific">Arabidopsis thaliana</name>
    <name type="common">Mouse-ear cress</name>
    <dbReference type="NCBI Taxonomy" id="3702"/>
    <lineage>
        <taxon>Eukaryota</taxon>
        <taxon>Viridiplantae</taxon>
        <taxon>Streptophyta</taxon>
        <taxon>Embryophyta</taxon>
        <taxon>Tracheophyta</taxon>
        <taxon>Spermatophyta</taxon>
        <taxon>Magnoliopsida</taxon>
        <taxon>eudicotyledons</taxon>
        <taxon>Gunneridae</taxon>
        <taxon>Pentapetalae</taxon>
        <taxon>rosids</taxon>
        <taxon>malvids</taxon>
        <taxon>Brassicales</taxon>
        <taxon>Brassicaceae</taxon>
        <taxon>Camelineae</taxon>
        <taxon>Arabidopsis</taxon>
    </lineage>
</organism>